<name>MERP_PSEFL</name>
<dbReference type="EMBL" id="X73112">
    <property type="protein sequence ID" value="CAA51540.1"/>
    <property type="molecule type" value="Genomic_DNA"/>
</dbReference>
<dbReference type="RefSeq" id="WP_000735441.1">
    <property type="nucleotide sequence ID" value="NZ_UGUS01000002.1"/>
</dbReference>
<dbReference type="SMR" id="Q51770"/>
<dbReference type="GeneID" id="93254058"/>
<dbReference type="OrthoDB" id="7205933at2"/>
<dbReference type="GO" id="GO:0042597">
    <property type="term" value="C:periplasmic space"/>
    <property type="evidence" value="ECO:0007669"/>
    <property type="project" value="UniProtKB-SubCell"/>
</dbReference>
<dbReference type="GO" id="GO:0045340">
    <property type="term" value="F:mercury ion binding"/>
    <property type="evidence" value="ECO:0007669"/>
    <property type="project" value="InterPro"/>
</dbReference>
<dbReference type="GO" id="GO:0015097">
    <property type="term" value="F:mercury ion transmembrane transporter activity"/>
    <property type="evidence" value="ECO:0007669"/>
    <property type="project" value="InterPro"/>
</dbReference>
<dbReference type="CDD" id="cd00371">
    <property type="entry name" value="HMA"/>
    <property type="match status" value="1"/>
</dbReference>
<dbReference type="FunFam" id="3.30.70.100:FF:000005">
    <property type="entry name" value="Copper-exporting P-type ATPase A"/>
    <property type="match status" value="1"/>
</dbReference>
<dbReference type="Gene3D" id="3.30.70.100">
    <property type="match status" value="1"/>
</dbReference>
<dbReference type="InterPro" id="IPR017969">
    <property type="entry name" value="Heavy-metal-associated_CS"/>
</dbReference>
<dbReference type="InterPro" id="IPR006121">
    <property type="entry name" value="HMA_dom"/>
</dbReference>
<dbReference type="InterPro" id="IPR036163">
    <property type="entry name" value="HMA_dom_sf"/>
</dbReference>
<dbReference type="InterPro" id="IPR011795">
    <property type="entry name" value="MerP"/>
</dbReference>
<dbReference type="InterPro" id="IPR001802">
    <property type="entry name" value="MerP/CopZ"/>
</dbReference>
<dbReference type="NCBIfam" id="TIGR02052">
    <property type="entry name" value="MerP"/>
    <property type="match status" value="1"/>
</dbReference>
<dbReference type="PANTHER" id="PTHR46594">
    <property type="entry name" value="P-TYPE CATION-TRANSPORTING ATPASE"/>
    <property type="match status" value="1"/>
</dbReference>
<dbReference type="PANTHER" id="PTHR46594:SF4">
    <property type="entry name" value="P-TYPE CATION-TRANSPORTING ATPASE"/>
    <property type="match status" value="1"/>
</dbReference>
<dbReference type="Pfam" id="PF00403">
    <property type="entry name" value="HMA"/>
    <property type="match status" value="1"/>
</dbReference>
<dbReference type="PRINTS" id="PR00946">
    <property type="entry name" value="HGSCAVENGER"/>
</dbReference>
<dbReference type="SUPFAM" id="SSF55008">
    <property type="entry name" value="HMA, heavy metal-associated domain"/>
    <property type="match status" value="1"/>
</dbReference>
<dbReference type="PROSITE" id="PS01047">
    <property type="entry name" value="HMA_1"/>
    <property type="match status" value="1"/>
</dbReference>
<dbReference type="PROSITE" id="PS50846">
    <property type="entry name" value="HMA_2"/>
    <property type="match status" value="1"/>
</dbReference>
<keyword id="KW-0475">Mercuric resistance</keyword>
<keyword id="KW-0476">Mercury</keyword>
<keyword id="KW-0479">Metal-binding</keyword>
<keyword id="KW-0574">Periplasm</keyword>
<keyword id="KW-0614">Plasmid</keyword>
<keyword id="KW-0732">Signal</keyword>
<gene>
    <name evidence="5" type="primary">merP</name>
</gene>
<accession>Q51770</accession>
<comment type="function">
    <text evidence="1">Involved in mercury resistance. Acts as a mercury scavenger that specifically binds to a mercuric ion in the periplasm and probably passes it to the cytoplasmic mercuric reductase MerA via the mercuric transport protein MerT.</text>
</comment>
<comment type="subunit">
    <text evidence="2">Monomer.</text>
</comment>
<comment type="subcellular location">
    <subcellularLocation>
        <location evidence="2">Periplasm</location>
    </subcellularLocation>
</comment>
<comment type="similarity">
    <text evidence="6">Belongs to the MerP family.</text>
</comment>
<sequence length="91" mass="9487">MKKLLSALALAAVVAPVWAATQTVTLSVPGMTCSACPITVKKAISKVDGVSKVDVTFETREAVVTFDDAKTSVQKLTKATEDAGYPSSVKN</sequence>
<evidence type="ECO:0000250" key="1">
    <source>
        <dbReference type="UniProtKB" id="P04129"/>
    </source>
</evidence>
<evidence type="ECO:0000250" key="2">
    <source>
        <dbReference type="UniProtKB" id="P13113"/>
    </source>
</evidence>
<evidence type="ECO:0000255" key="3"/>
<evidence type="ECO:0000255" key="4">
    <source>
        <dbReference type="PROSITE-ProRule" id="PRU00280"/>
    </source>
</evidence>
<evidence type="ECO:0000303" key="5">
    <source>
    </source>
</evidence>
<evidence type="ECO:0000305" key="6"/>
<proteinExistence type="inferred from homology"/>
<feature type="signal peptide" evidence="3">
    <location>
        <begin position="1"/>
        <end position="19"/>
    </location>
</feature>
<feature type="chain" id="PRO_0000021675" description="Mercuric transport protein periplasmic component">
    <location>
        <begin position="20"/>
        <end position="91"/>
    </location>
</feature>
<feature type="domain" description="HMA" evidence="4">
    <location>
        <begin position="22"/>
        <end position="88"/>
    </location>
</feature>
<feature type="binding site" evidence="4">
    <location>
        <position position="33"/>
    </location>
    <ligand>
        <name>Hg(2+)</name>
        <dbReference type="ChEBI" id="CHEBI:16793"/>
    </ligand>
</feature>
<feature type="binding site" evidence="4">
    <location>
        <position position="36"/>
    </location>
    <ligand>
        <name>Hg(2+)</name>
        <dbReference type="ChEBI" id="CHEBI:16793"/>
    </ligand>
</feature>
<protein>
    <recommendedName>
        <fullName evidence="1">Mercuric transport protein periplasmic component</fullName>
    </recommendedName>
    <alternativeName>
        <fullName evidence="1">Mercury scavenger protein</fullName>
    </alternativeName>
    <alternativeName>
        <fullName evidence="1">Periplasmic mercury ion-binding protein</fullName>
    </alternativeName>
</protein>
<organism>
    <name type="scientific">Pseudomonas fluorescens</name>
    <dbReference type="NCBI Taxonomy" id="294"/>
    <lineage>
        <taxon>Bacteria</taxon>
        <taxon>Pseudomonadati</taxon>
        <taxon>Pseudomonadota</taxon>
        <taxon>Gammaproteobacteria</taxon>
        <taxon>Pseudomonadales</taxon>
        <taxon>Pseudomonadaceae</taxon>
        <taxon>Pseudomonas</taxon>
    </lineage>
</organism>
<geneLocation type="plasmid">
    <name>pMER327</name>
</geneLocation>
<reference key="1">
    <citation type="journal article" date="1994" name="Gene">
        <title>The sequence of the mer operon of pMER327/419 and transposon ends of pMER327/419, 330 and 05.</title>
        <authorList>
            <person name="Hobman J."/>
            <person name="Kholodii G."/>
            <person name="Nikiforov V."/>
            <person name="Ritchie D.A."/>
            <person name="Strike P."/>
            <person name="Yurieva O."/>
        </authorList>
    </citation>
    <scope>NUCLEOTIDE SEQUENCE [GENOMIC DNA]</scope>
</reference>